<feature type="chain" id="PRO_0000182275" description="Transcriptional repressor NrdR">
    <location>
        <begin position="1"/>
        <end position="158"/>
    </location>
</feature>
<feature type="domain" description="ATP-cone" evidence="1">
    <location>
        <begin position="49"/>
        <end position="139"/>
    </location>
</feature>
<feature type="zinc finger region" evidence="1">
    <location>
        <begin position="3"/>
        <end position="34"/>
    </location>
</feature>
<name>NRDR_BRUME</name>
<accession>P67311</accession>
<accession>Q8YGG9</accession>
<dbReference type="EMBL" id="AE008917">
    <property type="protein sequence ID" value="AAL52371.1"/>
    <property type="molecule type" value="Genomic_DNA"/>
</dbReference>
<dbReference type="PIR" id="AH3400">
    <property type="entry name" value="AH3400"/>
</dbReference>
<dbReference type="RefSeq" id="WP_002966765.1">
    <property type="nucleotide sequence ID" value="NZ_GG703778.1"/>
</dbReference>
<dbReference type="SMR" id="P67311"/>
<dbReference type="GeneID" id="93016844"/>
<dbReference type="KEGG" id="bme:BMEI1190"/>
<dbReference type="KEGG" id="bmel:DK63_219"/>
<dbReference type="PATRIC" id="fig|224914.52.peg.227"/>
<dbReference type="eggNOG" id="COG1327">
    <property type="taxonomic scope" value="Bacteria"/>
</dbReference>
<dbReference type="Proteomes" id="UP000000419">
    <property type="component" value="Chromosome I"/>
</dbReference>
<dbReference type="GO" id="GO:0005524">
    <property type="term" value="F:ATP binding"/>
    <property type="evidence" value="ECO:0007669"/>
    <property type="project" value="UniProtKB-KW"/>
</dbReference>
<dbReference type="GO" id="GO:0003677">
    <property type="term" value="F:DNA binding"/>
    <property type="evidence" value="ECO:0007669"/>
    <property type="project" value="UniProtKB-KW"/>
</dbReference>
<dbReference type="GO" id="GO:0008270">
    <property type="term" value="F:zinc ion binding"/>
    <property type="evidence" value="ECO:0007669"/>
    <property type="project" value="UniProtKB-UniRule"/>
</dbReference>
<dbReference type="GO" id="GO:0045892">
    <property type="term" value="P:negative regulation of DNA-templated transcription"/>
    <property type="evidence" value="ECO:0007669"/>
    <property type="project" value="UniProtKB-UniRule"/>
</dbReference>
<dbReference type="HAMAP" id="MF_00440">
    <property type="entry name" value="NrdR"/>
    <property type="match status" value="1"/>
</dbReference>
<dbReference type="InterPro" id="IPR005144">
    <property type="entry name" value="ATP-cone_dom"/>
</dbReference>
<dbReference type="InterPro" id="IPR055173">
    <property type="entry name" value="NrdR-like_N"/>
</dbReference>
<dbReference type="InterPro" id="IPR003796">
    <property type="entry name" value="RNR_NrdR-like"/>
</dbReference>
<dbReference type="NCBIfam" id="TIGR00244">
    <property type="entry name" value="transcriptional regulator NrdR"/>
    <property type="match status" value="1"/>
</dbReference>
<dbReference type="PANTHER" id="PTHR30455">
    <property type="entry name" value="TRANSCRIPTIONAL REPRESSOR NRDR"/>
    <property type="match status" value="1"/>
</dbReference>
<dbReference type="PANTHER" id="PTHR30455:SF2">
    <property type="entry name" value="TRANSCRIPTIONAL REPRESSOR NRDR"/>
    <property type="match status" value="1"/>
</dbReference>
<dbReference type="Pfam" id="PF03477">
    <property type="entry name" value="ATP-cone"/>
    <property type="match status" value="1"/>
</dbReference>
<dbReference type="Pfam" id="PF22811">
    <property type="entry name" value="Zn_ribbon_NrdR"/>
    <property type="match status" value="1"/>
</dbReference>
<dbReference type="PROSITE" id="PS51161">
    <property type="entry name" value="ATP_CONE"/>
    <property type="match status" value="1"/>
</dbReference>
<reference key="1">
    <citation type="journal article" date="2002" name="Proc. Natl. Acad. Sci. U.S.A.">
        <title>The genome sequence of the facultative intracellular pathogen Brucella melitensis.</title>
        <authorList>
            <person name="DelVecchio V.G."/>
            <person name="Kapatral V."/>
            <person name="Redkar R.J."/>
            <person name="Patra G."/>
            <person name="Mujer C."/>
            <person name="Los T."/>
            <person name="Ivanova N."/>
            <person name="Anderson I."/>
            <person name="Bhattacharyya A."/>
            <person name="Lykidis A."/>
            <person name="Reznik G."/>
            <person name="Jablonski L."/>
            <person name="Larsen N."/>
            <person name="D'Souza M."/>
            <person name="Bernal A."/>
            <person name="Mazur M."/>
            <person name="Goltsman E."/>
            <person name="Selkov E."/>
            <person name="Elzer P.H."/>
            <person name="Hagius S."/>
            <person name="O'Callaghan D."/>
            <person name="Letesson J.-J."/>
            <person name="Haselkorn R."/>
            <person name="Kyrpides N.C."/>
            <person name="Overbeek R."/>
        </authorList>
    </citation>
    <scope>NUCLEOTIDE SEQUENCE [LARGE SCALE GENOMIC DNA]</scope>
    <source>
        <strain>ATCC 23456 / CCUG 17765 / NCTC 10094 / 16M</strain>
    </source>
</reference>
<proteinExistence type="inferred from homology"/>
<organism>
    <name type="scientific">Brucella melitensis biotype 1 (strain ATCC 23456 / CCUG 17765 / NCTC 10094 / 16M)</name>
    <dbReference type="NCBI Taxonomy" id="224914"/>
    <lineage>
        <taxon>Bacteria</taxon>
        <taxon>Pseudomonadati</taxon>
        <taxon>Pseudomonadota</taxon>
        <taxon>Alphaproteobacteria</taxon>
        <taxon>Hyphomicrobiales</taxon>
        <taxon>Brucellaceae</taxon>
        <taxon>Brucella/Ochrobactrum group</taxon>
        <taxon>Brucella</taxon>
    </lineage>
</organism>
<sequence>MRCPYCQSEDTQVKDSRPAEDGAVIRRRRVCSVCGGRFTTFERVQLRDLMVVKKSGRRVPFDRDKLTRSIEVALRKRDVDSERVERAISGIVRQLESAGEAEVTSDEIGRLAMDALKGIDDIAYIRFASVYRNFSKAVDFHNVIDELTVSETGDNLET</sequence>
<protein>
    <recommendedName>
        <fullName evidence="1">Transcriptional repressor NrdR</fullName>
    </recommendedName>
</protein>
<gene>
    <name evidence="1" type="primary">nrdR</name>
    <name type="ordered locus">BMEI1190</name>
</gene>
<keyword id="KW-0067">ATP-binding</keyword>
<keyword id="KW-0238">DNA-binding</keyword>
<keyword id="KW-0479">Metal-binding</keyword>
<keyword id="KW-0547">Nucleotide-binding</keyword>
<keyword id="KW-0678">Repressor</keyword>
<keyword id="KW-0804">Transcription</keyword>
<keyword id="KW-0805">Transcription regulation</keyword>
<keyword id="KW-0862">Zinc</keyword>
<keyword id="KW-0863">Zinc-finger</keyword>
<evidence type="ECO:0000255" key="1">
    <source>
        <dbReference type="HAMAP-Rule" id="MF_00440"/>
    </source>
</evidence>
<comment type="function">
    <text evidence="1">Negatively regulates transcription of bacterial ribonucleotide reductase nrd genes and operons by binding to NrdR-boxes.</text>
</comment>
<comment type="cofactor">
    <cofactor evidence="1">
        <name>Zn(2+)</name>
        <dbReference type="ChEBI" id="CHEBI:29105"/>
    </cofactor>
    <text evidence="1">Binds 1 zinc ion.</text>
</comment>
<comment type="similarity">
    <text evidence="1">Belongs to the NrdR family.</text>
</comment>